<protein>
    <recommendedName>
        <fullName>Pleiotropic drug resistance protein 2</fullName>
    </recommendedName>
    <alternativeName>
        <fullName>NpPDR2</fullName>
    </alternativeName>
</protein>
<organism>
    <name type="scientific">Nicotiana plumbaginifolia</name>
    <name type="common">Leadwort-leaved tobacco</name>
    <name type="synonym">Tex-Mex tobacco</name>
    <dbReference type="NCBI Taxonomy" id="4092"/>
    <lineage>
        <taxon>Eukaryota</taxon>
        <taxon>Viridiplantae</taxon>
        <taxon>Streptophyta</taxon>
        <taxon>Embryophyta</taxon>
        <taxon>Tracheophyta</taxon>
        <taxon>Spermatophyta</taxon>
        <taxon>Magnoliopsida</taxon>
        <taxon>eudicotyledons</taxon>
        <taxon>Gunneridae</taxon>
        <taxon>Pentapetalae</taxon>
        <taxon>asterids</taxon>
        <taxon>lamiids</taxon>
        <taxon>Solanales</taxon>
        <taxon>Solanaceae</taxon>
        <taxon>Nicotianoideae</taxon>
        <taxon>Nicotianeae</taxon>
        <taxon>Nicotiana</taxon>
    </lineage>
</organism>
<reference key="1">
    <citation type="journal article" date="2006" name="FEBS Lett.">
        <title>Organization and function of the plant pleiotropic drug resistance ABC transporter family.</title>
        <authorList>
            <person name="Crouzet J."/>
            <person name="Trombik T."/>
            <person name="Fraysse A.S."/>
            <person name="Boutry M."/>
        </authorList>
    </citation>
    <scope>NUCLEOTIDE SEQUENCE [MRNA]</scope>
    <scope>GENE FAMILY</scope>
    <scope>NOMENCLATURE</scope>
    <source>
        <tissue>Flower</tissue>
    </source>
</reference>
<sequence length="1461" mass="166354">MEESFLGDELTRLRSNSRMSSWRSSQSIREVFGGSSDVFMKNYSTRWREMAEEEEKELKWAAIDRLPTYNRLRKGMMKEVMSNGRVVHHEVDMTKLGNQDKKVLMESILKVVEDDNEQFLRRLRNRTDRVGIEIPKIEVRFQNLSVGGDAYVGTRALPTLLNSTLNTIEAVLGLIHLSPSKKRVVKILEDVSGIIRPSRMTLLLGPPGSGKTTFLKALAGKSEKDLRVNGKITYCGHEFHEFVPQRTSAYISQHDLHHGEMTVRETLDFAGRCLGVGTRYDLLVELSRREKEAGIMPDPQIDAFMKATAIDGQETSLITDYVLKILGLDICADIMVGDDMRRGISGGQKKRVTTGEMLVGPAKAFFMDEISKGLDSSTTYQIVKFMRQMVHINDITMVISLLQPAPETFDLFDDVIVLSEGQIVYQGPRENVLEFFEYMGFRCPERKAIADFLLEVTSKKDQEQYWFRKSRPYVYISVPEFSESFNSFQIGEQIIEELTIPYDKYSVHRAALVKNKYGISSWELFKSCFTREWLLMKRSSFLYIFKTTQITIMATIALTVFLRTQMKAGTVKDSAKFWGALFFSLINVMFNGMQELAMTVFRLPVFFKQRNSLFYPAWAFALPIWVLKIPISLVESAIWIILTYYTIGFAPAASRFFKQLLAFIGVHQMALSLFRFIAAAGRTQVVANTLGTFTLLMVFILGGFIVSKDDIQDWMIWGYYLSPMMYGQNAIAINEFLDDRWSAPTNGSQPTVGKTLLHARGLFTTESWYWISIGALFGFSLLFNVLFIAALTFLNPIGDTKAVKVENGDKNNRRPQETAIVGDIQMAPTRSQANTSSVIPFPNNESRKGMILPFQPLSLAFNHVNYYVDMPAEMKTQGVEEERLQLLRDASGAFRPGILTALVGVSGAGKTTLMDVLAGRKTGGYIEGSINISGYPKNQTTFARVSGYCEQNDIHSPYVTVYESLLYSAWLRLASDVKTETRKMFVEEVMELVELKLLRNALVGLPGVDGLSTEQRKRLTTAVELVANPSIIFMDEPTSGLDARAAAIVMRTVRKTVDTGRTVVCTIHQPSIDIFEAFDELLLMKIGGQVIYAGPLGHRSHKLVEYFETIPGVPKIRESDNPATWMLDVSSSSMEAQLVVDFAEVYANSNLYQRNQLLIKELSTPATCSKDLYFPTQYSQSFITQCKACFWKQHWSYWRNSQYNAIRFFMTVIIGILFGVIFWNKGNQIHRQQDLLNLLGATYAAVMFLGATNASAVQSVVAIERTVFYRERAAGMYSELPYAFAQVAIETIYVAIQTFVYSLLLFSMIGYQWTAVKFFYFYYFIFMCFTYFSMYGMMVVALTPGYQIAAIVMSFFLSFWNLFSGFLIPRPLIPVWWRWYYWASPVAWTIYGIFASQVGDRTDELELTGETEKIQVNEFLKEYLGYDHDFLLVVVFAHVGWVLLFFFVFAYGIKFLNYQKR</sequence>
<comment type="function">
    <text evidence="1">May be a general defense protein.</text>
</comment>
<comment type="subcellular location">
    <subcellularLocation>
        <location evidence="1">Membrane</location>
        <topology evidence="1">Multi-pass membrane protein</topology>
    </subcellularLocation>
</comment>
<comment type="similarity">
    <text evidence="4">Belongs to the ABC transporter superfamily. ABCG family. PDR (TC 3.A.1.205) subfamily.</text>
</comment>
<proteinExistence type="evidence at transcript level"/>
<evidence type="ECO:0000250" key="1"/>
<evidence type="ECO:0000255" key="2"/>
<evidence type="ECO:0000255" key="3">
    <source>
        <dbReference type="PROSITE-ProRule" id="PRU00434"/>
    </source>
</evidence>
<evidence type="ECO:0000305" key="4"/>
<dbReference type="EMBL" id="AJ831424">
    <property type="protein sequence ID" value="CAH40786.1"/>
    <property type="molecule type" value="mRNA"/>
</dbReference>
<dbReference type="SMR" id="Q2PCF1"/>
<dbReference type="GO" id="GO:0016020">
    <property type="term" value="C:membrane"/>
    <property type="evidence" value="ECO:0007669"/>
    <property type="project" value="UniProtKB-SubCell"/>
</dbReference>
<dbReference type="GO" id="GO:0140359">
    <property type="term" value="F:ABC-type transporter activity"/>
    <property type="evidence" value="ECO:0007669"/>
    <property type="project" value="InterPro"/>
</dbReference>
<dbReference type="GO" id="GO:0005524">
    <property type="term" value="F:ATP binding"/>
    <property type="evidence" value="ECO:0007669"/>
    <property type="project" value="UniProtKB-KW"/>
</dbReference>
<dbReference type="GO" id="GO:0016887">
    <property type="term" value="F:ATP hydrolysis activity"/>
    <property type="evidence" value="ECO:0007669"/>
    <property type="project" value="InterPro"/>
</dbReference>
<dbReference type="CDD" id="cd03233">
    <property type="entry name" value="ABCG_PDR_domain1"/>
    <property type="match status" value="1"/>
</dbReference>
<dbReference type="CDD" id="cd03232">
    <property type="entry name" value="ABCG_PDR_domain2"/>
    <property type="match status" value="1"/>
</dbReference>
<dbReference type="FunFam" id="3.40.50.300:FF:000179">
    <property type="entry name" value="ABC transporter G family member 34"/>
    <property type="match status" value="1"/>
</dbReference>
<dbReference type="FunFam" id="3.40.50.300:FF:000059">
    <property type="entry name" value="ABC transporter G family member 40"/>
    <property type="match status" value="1"/>
</dbReference>
<dbReference type="Gene3D" id="3.40.50.300">
    <property type="entry name" value="P-loop containing nucleotide triphosphate hydrolases"/>
    <property type="match status" value="2"/>
</dbReference>
<dbReference type="InterPro" id="IPR003593">
    <property type="entry name" value="AAA+_ATPase"/>
</dbReference>
<dbReference type="InterPro" id="IPR013525">
    <property type="entry name" value="ABC2_TM"/>
</dbReference>
<dbReference type="InterPro" id="IPR029481">
    <property type="entry name" value="ABC_trans_N"/>
</dbReference>
<dbReference type="InterPro" id="IPR003439">
    <property type="entry name" value="ABC_transporter-like_ATP-bd"/>
</dbReference>
<dbReference type="InterPro" id="IPR043926">
    <property type="entry name" value="ABCG_dom"/>
</dbReference>
<dbReference type="InterPro" id="IPR034001">
    <property type="entry name" value="ABCG_PDR_1"/>
</dbReference>
<dbReference type="InterPro" id="IPR034003">
    <property type="entry name" value="ABCG_PDR_2"/>
</dbReference>
<dbReference type="InterPro" id="IPR027417">
    <property type="entry name" value="P-loop_NTPase"/>
</dbReference>
<dbReference type="InterPro" id="IPR013581">
    <property type="entry name" value="PDR_assoc"/>
</dbReference>
<dbReference type="PANTHER" id="PTHR48040:SF48">
    <property type="entry name" value="AAA+ ATPASE DOMAIN, PIGMENT PERMEASE_PROTEIN ATP-BINDING CASSETTE SUB-FAMILY G"/>
    <property type="match status" value="1"/>
</dbReference>
<dbReference type="PANTHER" id="PTHR48040">
    <property type="entry name" value="PLEIOTROPIC DRUG RESISTANCE PROTEIN 1-LIKE ISOFORM X1"/>
    <property type="match status" value="1"/>
</dbReference>
<dbReference type="Pfam" id="PF01061">
    <property type="entry name" value="ABC2_membrane"/>
    <property type="match status" value="2"/>
</dbReference>
<dbReference type="Pfam" id="PF19055">
    <property type="entry name" value="ABC2_membrane_7"/>
    <property type="match status" value="1"/>
</dbReference>
<dbReference type="Pfam" id="PF00005">
    <property type="entry name" value="ABC_tran"/>
    <property type="match status" value="2"/>
</dbReference>
<dbReference type="Pfam" id="PF14510">
    <property type="entry name" value="ABC_trans_N"/>
    <property type="match status" value="1"/>
</dbReference>
<dbReference type="Pfam" id="PF08370">
    <property type="entry name" value="PDR_assoc"/>
    <property type="match status" value="1"/>
</dbReference>
<dbReference type="SMART" id="SM00382">
    <property type="entry name" value="AAA"/>
    <property type="match status" value="2"/>
</dbReference>
<dbReference type="SUPFAM" id="SSF52540">
    <property type="entry name" value="P-loop containing nucleoside triphosphate hydrolases"/>
    <property type="match status" value="2"/>
</dbReference>
<dbReference type="PROSITE" id="PS50893">
    <property type="entry name" value="ABC_TRANSPORTER_2"/>
    <property type="match status" value="2"/>
</dbReference>
<feature type="chain" id="PRO_0000234654" description="Pleiotropic drug resistance protein 2">
    <location>
        <begin position="1"/>
        <end position="1461"/>
    </location>
</feature>
<feature type="transmembrane region" description="Helical" evidence="2">
    <location>
        <begin position="541"/>
        <end position="561"/>
    </location>
</feature>
<feature type="transmembrane region" description="Helical" evidence="2">
    <location>
        <begin position="577"/>
        <end position="597"/>
    </location>
</feature>
<feature type="transmembrane region" description="Helical" evidence="2">
    <location>
        <begin position="622"/>
        <end position="642"/>
    </location>
</feature>
<feature type="transmembrane region" description="Helical" evidence="2">
    <location>
        <begin position="660"/>
        <end position="680"/>
    </location>
</feature>
<feature type="transmembrane region" description="Helical" evidence="2">
    <location>
        <begin position="685"/>
        <end position="705"/>
    </location>
</feature>
<feature type="transmembrane region" description="Helical" evidence="2">
    <location>
        <begin position="771"/>
        <end position="791"/>
    </location>
</feature>
<feature type="transmembrane region" description="Helical" evidence="2">
    <location>
        <begin position="1203"/>
        <end position="1223"/>
    </location>
</feature>
<feature type="transmembrane region" description="Helical" evidence="2">
    <location>
        <begin position="1243"/>
        <end position="1263"/>
    </location>
</feature>
<feature type="transmembrane region" description="Helical" evidence="2">
    <location>
        <begin position="1291"/>
        <end position="1311"/>
    </location>
</feature>
<feature type="transmembrane region" description="Helical" evidence="2">
    <location>
        <begin position="1321"/>
        <end position="1341"/>
    </location>
</feature>
<feature type="transmembrane region" description="Helical" evidence="2">
    <location>
        <begin position="1348"/>
        <end position="1368"/>
    </location>
</feature>
<feature type="transmembrane region" description="Helical" evidence="2">
    <location>
        <begin position="1379"/>
        <end position="1399"/>
    </location>
</feature>
<feature type="transmembrane region" description="Helical" evidence="2">
    <location>
        <begin position="1430"/>
        <end position="1450"/>
    </location>
</feature>
<feature type="domain" description="ABC transporter 1" evidence="3">
    <location>
        <begin position="172"/>
        <end position="445"/>
    </location>
</feature>
<feature type="domain" description="ABC transmembrane type-2 1">
    <location>
        <begin position="523"/>
        <end position="736"/>
    </location>
</feature>
<feature type="domain" description="ABC transporter 2" evidence="3">
    <location>
        <begin position="859"/>
        <end position="1111"/>
    </location>
</feature>
<feature type="domain" description="ABC transmembrane type-2 2">
    <location>
        <begin position="1184"/>
        <end position="1398"/>
    </location>
</feature>
<feature type="binding site" evidence="3">
    <location>
        <begin position="205"/>
        <end position="212"/>
    </location>
    <ligand>
        <name>ATP</name>
        <dbReference type="ChEBI" id="CHEBI:30616"/>
        <label>1</label>
    </ligand>
</feature>
<feature type="binding site" evidence="3">
    <location>
        <begin position="904"/>
        <end position="911"/>
    </location>
    <ligand>
        <name>ATP</name>
        <dbReference type="ChEBI" id="CHEBI:30616"/>
        <label>2</label>
    </ligand>
</feature>
<gene>
    <name type="primary">PDR2</name>
</gene>
<name>PDR2_NICPL</name>
<keyword id="KW-0067">ATP-binding</keyword>
<keyword id="KW-0472">Membrane</keyword>
<keyword id="KW-0547">Nucleotide-binding</keyword>
<keyword id="KW-0677">Repeat</keyword>
<keyword id="KW-0812">Transmembrane</keyword>
<keyword id="KW-1133">Transmembrane helix</keyword>
<keyword id="KW-0813">Transport</keyword>
<accession>Q2PCF1</accession>